<gene>
    <name type="primary">pdiA</name>
    <name type="synonym">pdi1</name>
</gene>
<comment type="function">
    <text evidence="1">Participates in the folding of proteins containing disulfide bonds, may be involved in glycosylation, prolyl hydroxylation and triglyceride transfer.</text>
</comment>
<comment type="catalytic activity">
    <reaction>
        <text>Catalyzes the rearrangement of -S-S- bonds in proteins.</text>
        <dbReference type="EC" id="5.3.4.1"/>
    </reaction>
</comment>
<comment type="subcellular location">
    <subcellularLocation>
        <location evidence="4">Endoplasmic reticulum lumen</location>
    </subcellularLocation>
</comment>
<comment type="similarity">
    <text evidence="6">Belongs to the protein disulfide isomerase family.</text>
</comment>
<proteinExistence type="evidence at transcript level"/>
<dbReference type="EC" id="5.3.4.1"/>
<dbReference type="EMBL" id="X98797">
    <property type="protein sequence ID" value="CAA67332.1"/>
    <property type="molecule type" value="Genomic_DNA"/>
</dbReference>
<dbReference type="EMBL" id="X89449">
    <property type="protein sequence ID" value="CAA61619.1"/>
    <property type="molecule type" value="mRNA"/>
</dbReference>
<dbReference type="PIR" id="S57942">
    <property type="entry name" value="S57942"/>
</dbReference>
<dbReference type="SMR" id="Q12730"/>
<dbReference type="PaxDb" id="5061-CADANGAP00002931"/>
<dbReference type="VEuPathDB" id="FungiDB:An02g14800"/>
<dbReference type="VEuPathDB" id="FungiDB:ASPNIDRAFT2_1136225"/>
<dbReference type="VEuPathDB" id="FungiDB:ATCC64974_50950"/>
<dbReference type="VEuPathDB" id="FungiDB:M747DRAFT_299997"/>
<dbReference type="eggNOG" id="KOG0190">
    <property type="taxonomic scope" value="Eukaryota"/>
</dbReference>
<dbReference type="OrthoDB" id="427280at2759"/>
<dbReference type="GO" id="GO:0005788">
    <property type="term" value="C:endoplasmic reticulum lumen"/>
    <property type="evidence" value="ECO:0007669"/>
    <property type="project" value="UniProtKB-SubCell"/>
</dbReference>
<dbReference type="GO" id="GO:0003756">
    <property type="term" value="F:protein disulfide isomerase activity"/>
    <property type="evidence" value="ECO:0007669"/>
    <property type="project" value="UniProtKB-EC"/>
</dbReference>
<dbReference type="GO" id="GO:0006457">
    <property type="term" value="P:protein folding"/>
    <property type="evidence" value="ECO:0007669"/>
    <property type="project" value="TreeGrafter"/>
</dbReference>
<dbReference type="GO" id="GO:0034976">
    <property type="term" value="P:response to endoplasmic reticulum stress"/>
    <property type="evidence" value="ECO:0007669"/>
    <property type="project" value="TreeGrafter"/>
</dbReference>
<dbReference type="CDD" id="cd02961">
    <property type="entry name" value="PDI_a_family"/>
    <property type="match status" value="1"/>
</dbReference>
<dbReference type="CDD" id="cd02995">
    <property type="entry name" value="PDI_a_PDI_a'_C"/>
    <property type="match status" value="1"/>
</dbReference>
<dbReference type="CDD" id="cd02982">
    <property type="entry name" value="PDI_b'_family"/>
    <property type="match status" value="1"/>
</dbReference>
<dbReference type="CDD" id="cd02981">
    <property type="entry name" value="PDI_b_family"/>
    <property type="match status" value="1"/>
</dbReference>
<dbReference type="FunFam" id="3.40.30.10:FF:000139">
    <property type="entry name" value="Protein disulfide-isomerase"/>
    <property type="match status" value="1"/>
</dbReference>
<dbReference type="FunFam" id="3.40.30.10:FF:000154">
    <property type="entry name" value="Protein disulfide-isomerase"/>
    <property type="match status" value="1"/>
</dbReference>
<dbReference type="FunFam" id="3.40.30.10:FF:000185">
    <property type="entry name" value="Protein disulfide-isomerase"/>
    <property type="match status" value="1"/>
</dbReference>
<dbReference type="FunFam" id="3.40.30.10:FF:000017">
    <property type="entry name" value="Protein disulfide-isomerase A4"/>
    <property type="match status" value="1"/>
</dbReference>
<dbReference type="Gene3D" id="3.40.30.10">
    <property type="entry name" value="Glutaredoxin"/>
    <property type="match status" value="4"/>
</dbReference>
<dbReference type="InterPro" id="IPR005788">
    <property type="entry name" value="PDI_thioredoxin-like_dom"/>
</dbReference>
<dbReference type="InterPro" id="IPR005792">
    <property type="entry name" value="Prot_disulphide_isomerase"/>
</dbReference>
<dbReference type="InterPro" id="IPR036249">
    <property type="entry name" value="Thioredoxin-like_sf"/>
</dbReference>
<dbReference type="InterPro" id="IPR017937">
    <property type="entry name" value="Thioredoxin_CS"/>
</dbReference>
<dbReference type="InterPro" id="IPR013766">
    <property type="entry name" value="Thioredoxin_domain"/>
</dbReference>
<dbReference type="NCBIfam" id="TIGR01130">
    <property type="entry name" value="ER_PDI_fam"/>
    <property type="match status" value="1"/>
</dbReference>
<dbReference type="NCBIfam" id="TIGR01126">
    <property type="entry name" value="pdi_dom"/>
    <property type="match status" value="1"/>
</dbReference>
<dbReference type="PANTHER" id="PTHR18929">
    <property type="entry name" value="PROTEIN DISULFIDE ISOMERASE"/>
    <property type="match status" value="1"/>
</dbReference>
<dbReference type="PANTHER" id="PTHR18929:SF132">
    <property type="entry name" value="PROTEIN DISULFIDE-ISOMERASE A3"/>
    <property type="match status" value="1"/>
</dbReference>
<dbReference type="Pfam" id="PF00085">
    <property type="entry name" value="Thioredoxin"/>
    <property type="match status" value="2"/>
</dbReference>
<dbReference type="Pfam" id="PF13848">
    <property type="entry name" value="Thioredoxin_6"/>
    <property type="match status" value="1"/>
</dbReference>
<dbReference type="PRINTS" id="PR00312">
    <property type="entry name" value="CALSEQUESTRN"/>
</dbReference>
<dbReference type="SUPFAM" id="SSF52833">
    <property type="entry name" value="Thioredoxin-like"/>
    <property type="match status" value="4"/>
</dbReference>
<dbReference type="PROSITE" id="PS00014">
    <property type="entry name" value="ER_TARGET"/>
    <property type="match status" value="1"/>
</dbReference>
<dbReference type="PROSITE" id="PS00194">
    <property type="entry name" value="THIOREDOXIN_1"/>
    <property type="match status" value="2"/>
</dbReference>
<dbReference type="PROSITE" id="PS51352">
    <property type="entry name" value="THIOREDOXIN_2"/>
    <property type="match status" value="2"/>
</dbReference>
<sequence>MRSFAPWLVSLLGASAVVAAADTESDVISLDQDTFESFMNEHGLVLAEFFAPWCGHCKALAPKYEEAATELKAKNIPLVKVDCTAEEDLCRSQGVEGYPTLKIFRGVDSSKPYQGARQTESIVSYMIKQSLPAVSSVNEENLEEIKTMDKIVVIGYIPSDDQETYQAFEKYAESQRDNYLFAATDDAAIAKSEGVEQPSIVLYKDFDEKKAVYDGEIEQEAIHSWVKSASTPLVGEIGPETYSGYIGAGVPLAYIFAETKEEREKYTEDFKPIAQKHKGAINIATIDAKMFGAHAGNLNLDSQKFPAFAIQDPAKNAKYPYDQAKELNADEVEKFIQDVLDGKVEPSIKSEPVPESQEGPVTVVVAHSYKDLVIDNDKDVLLEFYAPWCGHCKALAPKYDELAALYADHPDLAAKVTIAKIDATANDVPDPITGFPTLRLYPAGAKDSPIEYSGSRTVEDLANFVKENGKHNVDALNVASEETQEGGDVTEAAPSATEAETPAATDDEKAEHDEL</sequence>
<keyword id="KW-1015">Disulfide bond</keyword>
<keyword id="KW-0256">Endoplasmic reticulum</keyword>
<keyword id="KW-0413">Isomerase</keyword>
<keyword id="KW-0676">Redox-active center</keyword>
<keyword id="KW-0677">Repeat</keyword>
<keyword id="KW-0732">Signal</keyword>
<evidence type="ECO:0000250" key="1"/>
<evidence type="ECO:0000255" key="2"/>
<evidence type="ECO:0000255" key="3">
    <source>
        <dbReference type="PROSITE-ProRule" id="PRU00691"/>
    </source>
</evidence>
<evidence type="ECO:0000255" key="4">
    <source>
        <dbReference type="PROSITE-ProRule" id="PRU10138"/>
    </source>
</evidence>
<evidence type="ECO:0000256" key="5">
    <source>
        <dbReference type="SAM" id="MobiDB-lite"/>
    </source>
</evidence>
<evidence type="ECO:0000305" key="6"/>
<feature type="signal peptide" evidence="2">
    <location>
        <begin position="1"/>
        <end position="20"/>
    </location>
</feature>
<feature type="chain" id="PRO_0000034213" description="Protein disulfide-isomerase">
    <location>
        <begin position="21"/>
        <end position="515"/>
    </location>
</feature>
<feature type="domain" description="Thioredoxin 1" evidence="3">
    <location>
        <begin position="21"/>
        <end position="132"/>
    </location>
</feature>
<feature type="domain" description="Thioredoxin 2" evidence="3">
    <location>
        <begin position="339"/>
        <end position="470"/>
    </location>
</feature>
<feature type="region of interest" description="Disordered" evidence="5">
    <location>
        <begin position="478"/>
        <end position="515"/>
    </location>
</feature>
<feature type="short sequence motif" description="Prevents secretion from ER" evidence="4">
    <location>
        <begin position="512"/>
        <end position="515"/>
    </location>
</feature>
<feature type="compositionally biased region" description="Low complexity" evidence="5">
    <location>
        <begin position="490"/>
        <end position="504"/>
    </location>
</feature>
<feature type="compositionally biased region" description="Basic and acidic residues" evidence="5">
    <location>
        <begin position="506"/>
        <end position="515"/>
    </location>
</feature>
<feature type="active site" description="Nucleophile" evidence="1">
    <location>
        <position position="54"/>
    </location>
</feature>
<feature type="active site" description="Nucleophile" evidence="1">
    <location>
        <position position="57"/>
    </location>
</feature>
<feature type="active site" description="Nucleophile" evidence="1">
    <location>
        <position position="389"/>
    </location>
</feature>
<feature type="active site" description="Nucleophile" evidence="1">
    <location>
        <position position="392"/>
    </location>
</feature>
<feature type="site" description="Contributes to redox potential value" evidence="1">
    <location>
        <position position="55"/>
    </location>
</feature>
<feature type="site" description="Contributes to redox potential value" evidence="1">
    <location>
        <position position="56"/>
    </location>
</feature>
<feature type="site" description="Lowers pKa of C-terminal Cys of first active site" evidence="1">
    <location>
        <position position="117"/>
    </location>
</feature>
<feature type="site" description="Contributes to redox potential value" evidence="1">
    <location>
        <position position="390"/>
    </location>
</feature>
<feature type="site" description="Contributes to redox potential value" evidence="1">
    <location>
        <position position="391"/>
    </location>
</feature>
<feature type="site" description="Lowers pKa of C-terminal Cys of second active site" evidence="1">
    <location>
        <position position="456"/>
    </location>
</feature>
<feature type="disulfide bond" description="Redox-active" evidence="3">
    <location>
        <begin position="54"/>
        <end position="57"/>
    </location>
</feature>
<feature type="disulfide bond" description="Redox-active" evidence="3">
    <location>
        <begin position="389"/>
        <end position="392"/>
    </location>
</feature>
<organism>
    <name type="scientific">Aspergillus niger</name>
    <dbReference type="NCBI Taxonomy" id="5061"/>
    <lineage>
        <taxon>Eukaryota</taxon>
        <taxon>Fungi</taxon>
        <taxon>Dikarya</taxon>
        <taxon>Ascomycota</taxon>
        <taxon>Pezizomycotina</taxon>
        <taxon>Eurotiomycetes</taxon>
        <taxon>Eurotiomycetidae</taxon>
        <taxon>Eurotiales</taxon>
        <taxon>Aspergillaceae</taxon>
        <taxon>Aspergillus</taxon>
        <taxon>Aspergillus subgen. Circumdati</taxon>
    </lineage>
</organism>
<protein>
    <recommendedName>
        <fullName>Protein disulfide-isomerase</fullName>
        <shortName>PDI</shortName>
        <ecNumber>5.3.4.1</ecNumber>
    </recommendedName>
</protein>
<accession>Q12730</accession>
<reference key="1">
    <citation type="journal article" date="1997" name="Curr. Genet.">
        <title>Isolation and characterisation of a gene encoding protein disulphide isomerase, pdiA, from Aspergillus niger.</title>
        <authorList>
            <person name="Ngiam C."/>
            <person name="Jeenes D.J."/>
            <person name="Archer D.B."/>
        </authorList>
    </citation>
    <scope>NUCLEOTIDE SEQUENCE [GENOMIC DNA]</scope>
    <source>
        <strain>ATCC 9029 / NRRL 3 / CBS 120.49 / DSM 2466 / N400 / FGSC 732</strain>
    </source>
</reference>
<reference key="2">
    <citation type="submission" date="1995-07" db="EMBL/GenBank/DDBJ databases">
        <authorList>
            <person name="Malpricht S."/>
        </authorList>
    </citation>
    <scope>NUCLEOTIDE SEQUENCE [MRNA]</scope>
    <source>
        <strain>ATCC 9029 / NRRL 3 / CBS 120.49 / DSM 2466 / N400 / FGSC 732</strain>
    </source>
</reference>
<name>PDI_ASPNG</name>